<gene>
    <name type="primary">lrrc23</name>
    <name type="ORF">TNeu057d16.1</name>
</gene>
<proteinExistence type="evidence at transcript level"/>
<comment type="subcellular location">
    <subcellularLocation>
        <location evidence="1">Cytoplasm</location>
        <location evidence="1">Cytoskeleton</location>
        <location evidence="1">Flagellum axoneme</location>
    </subcellularLocation>
    <subcellularLocation>
        <location evidence="2">Cytoplasm</location>
    </subcellularLocation>
</comment>
<keyword id="KW-0966">Cell projection</keyword>
<keyword id="KW-0969">Cilium</keyword>
<keyword id="KW-0175">Coiled coil</keyword>
<keyword id="KW-0963">Cytoplasm</keyword>
<keyword id="KW-0206">Cytoskeleton</keyword>
<keyword id="KW-0282">Flagellum</keyword>
<keyword id="KW-0433">Leucine-rich repeat</keyword>
<keyword id="KW-1185">Reference proteome</keyword>
<keyword id="KW-0677">Repeat</keyword>
<feature type="chain" id="PRO_0000264238" description="Leucine-rich repeat-containing protein 23">
    <location>
        <begin position="1"/>
        <end position="350"/>
    </location>
</feature>
<feature type="repeat" description="LRR 1">
    <location>
        <begin position="107"/>
        <end position="128"/>
    </location>
</feature>
<feature type="repeat" description="LRR 2">
    <location>
        <begin position="129"/>
        <end position="150"/>
    </location>
</feature>
<feature type="repeat" description="LRR 3">
    <location>
        <begin position="151"/>
        <end position="171"/>
    </location>
</feature>
<feature type="repeat" description="LRR 4">
    <location>
        <begin position="172"/>
        <end position="193"/>
    </location>
</feature>
<feature type="repeat" description="LRR 5">
    <location>
        <begin position="196"/>
        <end position="216"/>
    </location>
</feature>
<feature type="repeat" description="LRR 6">
    <location>
        <begin position="217"/>
        <end position="238"/>
    </location>
</feature>
<feature type="repeat" description="LRR 7">
    <location>
        <begin position="239"/>
        <end position="260"/>
    </location>
</feature>
<feature type="repeat" description="LRR 8">
    <location>
        <begin position="262"/>
        <end position="283"/>
    </location>
</feature>
<feature type="domain" description="LRRCT">
    <location>
        <begin position="296"/>
        <end position="334"/>
    </location>
</feature>
<feature type="region of interest" description="Disordered" evidence="4">
    <location>
        <begin position="1"/>
        <end position="64"/>
    </location>
</feature>
<feature type="region of interest" description="Disordered" evidence="4">
    <location>
        <begin position="325"/>
        <end position="350"/>
    </location>
</feature>
<feature type="coiled-coil region" evidence="3">
    <location>
        <begin position="314"/>
        <end position="344"/>
    </location>
</feature>
<feature type="compositionally biased region" description="Acidic residues" evidence="4">
    <location>
        <begin position="1"/>
        <end position="54"/>
    </location>
</feature>
<accession>Q28CU0</accession>
<accession>A4IHX0</accession>
<evidence type="ECO:0000250" key="1">
    <source>
        <dbReference type="UniProtKB" id="O35125"/>
    </source>
</evidence>
<evidence type="ECO:0000250" key="2">
    <source>
        <dbReference type="UniProtKB" id="Q53EV4"/>
    </source>
</evidence>
<evidence type="ECO:0000255" key="3"/>
<evidence type="ECO:0000256" key="4">
    <source>
        <dbReference type="SAM" id="MobiDB-lite"/>
    </source>
</evidence>
<dbReference type="EMBL" id="CR926199">
    <property type="protein sequence ID" value="CAJ82798.1"/>
    <property type="molecule type" value="mRNA"/>
</dbReference>
<dbReference type="EMBL" id="BC135728">
    <property type="protein sequence ID" value="AAI35729.1"/>
    <property type="molecule type" value="mRNA"/>
</dbReference>
<dbReference type="RefSeq" id="NP_001016525.1">
    <property type="nucleotide sequence ID" value="NM_001016525.1"/>
</dbReference>
<dbReference type="SMR" id="Q28CU0"/>
<dbReference type="FunCoup" id="Q28CU0">
    <property type="interactions" value="40"/>
</dbReference>
<dbReference type="STRING" id="8364.ENSXETP00000018076"/>
<dbReference type="PaxDb" id="8364-ENSXETP00000051602"/>
<dbReference type="DNASU" id="549279"/>
<dbReference type="GeneID" id="549279"/>
<dbReference type="KEGG" id="xtr:549279"/>
<dbReference type="AGR" id="Xenbase:XB-GENE-877189"/>
<dbReference type="CTD" id="10233"/>
<dbReference type="Xenbase" id="XB-GENE-877189">
    <property type="gene designation" value="lrrc23"/>
</dbReference>
<dbReference type="eggNOG" id="KOG0531">
    <property type="taxonomic scope" value="Eukaryota"/>
</dbReference>
<dbReference type="HOGENOM" id="CLU_056804_1_1_1"/>
<dbReference type="InParanoid" id="Q28CU0"/>
<dbReference type="OrthoDB" id="271226at2759"/>
<dbReference type="Proteomes" id="UP000008143">
    <property type="component" value="Chromosome 7"/>
</dbReference>
<dbReference type="GO" id="GO:0005737">
    <property type="term" value="C:cytoplasm"/>
    <property type="evidence" value="ECO:0000250"/>
    <property type="project" value="UniProtKB"/>
</dbReference>
<dbReference type="GO" id="GO:0005856">
    <property type="term" value="C:cytoskeleton"/>
    <property type="evidence" value="ECO:0007669"/>
    <property type="project" value="UniProtKB-KW"/>
</dbReference>
<dbReference type="GO" id="GO:0031514">
    <property type="term" value="C:motile cilium"/>
    <property type="evidence" value="ECO:0007669"/>
    <property type="project" value="UniProtKB-KW"/>
</dbReference>
<dbReference type="FunFam" id="3.80.10.10:FF:001051">
    <property type="entry name" value="Leucine-rich repeat-containing 23"/>
    <property type="match status" value="1"/>
</dbReference>
<dbReference type="Gene3D" id="3.80.10.10">
    <property type="entry name" value="Ribonuclease Inhibitor"/>
    <property type="match status" value="2"/>
</dbReference>
<dbReference type="InterPro" id="IPR001611">
    <property type="entry name" value="Leu-rich_rpt"/>
</dbReference>
<dbReference type="InterPro" id="IPR003591">
    <property type="entry name" value="Leu-rich_rpt_typical-subtyp"/>
</dbReference>
<dbReference type="InterPro" id="IPR032675">
    <property type="entry name" value="LRR_dom_sf"/>
</dbReference>
<dbReference type="InterPro" id="IPR050836">
    <property type="entry name" value="SDS22/Internalin_LRR"/>
</dbReference>
<dbReference type="PANTHER" id="PTHR46652:SF8">
    <property type="entry name" value="LEUCINE RICH REPEAT CONTAINING 23"/>
    <property type="match status" value="1"/>
</dbReference>
<dbReference type="PANTHER" id="PTHR46652">
    <property type="entry name" value="LEUCINE-RICH REPEAT AND IQ DOMAIN-CONTAINING PROTEIN 1-RELATED"/>
    <property type="match status" value="1"/>
</dbReference>
<dbReference type="Pfam" id="PF14580">
    <property type="entry name" value="LRR_9"/>
    <property type="match status" value="1"/>
</dbReference>
<dbReference type="SMART" id="SM00365">
    <property type="entry name" value="LRR_SD22"/>
    <property type="match status" value="5"/>
</dbReference>
<dbReference type="SMART" id="SM00369">
    <property type="entry name" value="LRR_TYP"/>
    <property type="match status" value="5"/>
</dbReference>
<dbReference type="SUPFAM" id="SSF52058">
    <property type="entry name" value="L domain-like"/>
    <property type="match status" value="1"/>
</dbReference>
<dbReference type="PROSITE" id="PS51450">
    <property type="entry name" value="LRR"/>
    <property type="match status" value="7"/>
</dbReference>
<reference key="1">
    <citation type="submission" date="2006-10" db="EMBL/GenBank/DDBJ databases">
        <authorList>
            <consortium name="Sanger Xenopus tropicalis EST/cDNA project"/>
        </authorList>
    </citation>
    <scope>NUCLEOTIDE SEQUENCE [LARGE SCALE MRNA]</scope>
    <source>
        <tissue>Neurula</tissue>
    </source>
</reference>
<reference key="2">
    <citation type="submission" date="2007-03" db="EMBL/GenBank/DDBJ databases">
        <authorList>
            <consortium name="NIH - Xenopus Gene Collection (XGC) project"/>
        </authorList>
    </citation>
    <scope>NUCLEOTIDE SEQUENCE [LARGE SCALE MRNA]</scope>
    <source>
        <tissue>Embryo</tissue>
    </source>
</reference>
<protein>
    <recommendedName>
        <fullName>Leucine-rich repeat-containing protein 23</fullName>
    </recommendedName>
</protein>
<sequence>MEDETLEDGPEEEEEDEEEGTAEETNQDVTERDEEEEAEKDEEEDKEEEEEAEKEEPPPHMPLSEEMLRDGLSLLCKTGNGLAHAYVKLEVKERELTDISVLQSFIHLRYVDLSQNSLQDLSPLGALTHLLSLRADHNQLVSVSGLGELPYLQVASFAQNRIKSLQGFGHPRLETLNLIGNELRDLEGLECSNLSSLHTLELRSNQLLSTAGLNLPSLRELYLGQNNISRLEGLEALVNLTTLHLRDNQLESLDGFSEHLQALQYLNLRSNMVAKLQEVQKLYCLPRLRALVLRENPCEEEEGYRMETLIALPQLERLDKDFFEEEEKREAAETKKAREEEMAEPGEKGN</sequence>
<name>LRC23_XENTR</name>
<organism>
    <name type="scientific">Xenopus tropicalis</name>
    <name type="common">Western clawed frog</name>
    <name type="synonym">Silurana tropicalis</name>
    <dbReference type="NCBI Taxonomy" id="8364"/>
    <lineage>
        <taxon>Eukaryota</taxon>
        <taxon>Metazoa</taxon>
        <taxon>Chordata</taxon>
        <taxon>Craniata</taxon>
        <taxon>Vertebrata</taxon>
        <taxon>Euteleostomi</taxon>
        <taxon>Amphibia</taxon>
        <taxon>Batrachia</taxon>
        <taxon>Anura</taxon>
        <taxon>Pipoidea</taxon>
        <taxon>Pipidae</taxon>
        <taxon>Xenopodinae</taxon>
        <taxon>Xenopus</taxon>
        <taxon>Silurana</taxon>
    </lineage>
</organism>